<feature type="chain" id="PRO_0000369614" description="Ninja-family protein AFP1">
    <location>
        <begin position="1"/>
        <end position="345"/>
    </location>
</feature>
<feature type="region of interest" description="Disordered" evidence="1">
    <location>
        <begin position="114"/>
        <end position="185"/>
    </location>
</feature>
<feature type="region of interest" description="Disordered" evidence="1">
    <location>
        <begin position="201"/>
        <end position="256"/>
    </location>
</feature>
<feature type="compositionally biased region" description="Basic and acidic residues" evidence="1">
    <location>
        <begin position="123"/>
        <end position="132"/>
    </location>
</feature>
<feature type="compositionally biased region" description="Basic and acidic residues" evidence="1">
    <location>
        <begin position="222"/>
        <end position="232"/>
    </location>
</feature>
<feature type="compositionally biased region" description="Low complexity" evidence="1">
    <location>
        <begin position="235"/>
        <end position="249"/>
    </location>
</feature>
<feature type="sequence conflict" description="In Ref. 4; AAM67141." evidence="4" ref="4">
    <original>HH</original>
    <variation>R</variation>
    <location>
        <begin position="84"/>
        <end position="85"/>
    </location>
</feature>
<feature type="sequence conflict" description="In Ref. 4; AAM67141." evidence="4" ref="4">
    <original>L</original>
    <variation>F</variation>
    <location>
        <position position="190"/>
    </location>
</feature>
<feature type="sequence conflict" description="In Ref. 4; AAM67141." evidence="4" ref="4">
    <original>G</original>
    <variation>V</variation>
    <location>
        <position position="204"/>
    </location>
</feature>
<feature type="sequence conflict" description="In Ref. 4; AAM67141." evidence="4" ref="4">
    <original>T</original>
    <variation>N</variation>
    <location>
        <position position="237"/>
    </location>
</feature>
<feature type="sequence conflict" description="In Ref. 4; AAM67141." evidence="4" ref="4">
    <original>P</original>
    <variation>Q</variation>
    <location>
        <position position="240"/>
    </location>
</feature>
<gene>
    <name type="primary">AFP1</name>
    <name type="synonym">AFP</name>
    <name type="ordered locus">At1g69260</name>
    <name type="ORF">F23O10.16</name>
    <name type="ORF">F4N2.22</name>
</gene>
<proteinExistence type="evidence at protein level"/>
<protein>
    <recommendedName>
        <fullName>Ninja-family protein AFP1</fullName>
    </recommendedName>
    <alternativeName>
        <fullName>ABI five-binding protein 1</fullName>
        <shortName>ABI5-binding protein 1</shortName>
    </alternativeName>
</protein>
<name>AFP1_ARATH</name>
<accession>Q9LQ98</accession>
<accession>Q8L8S9</accession>
<accession>Q9C980</accession>
<comment type="function">
    <text evidence="2">Acts as a negative regulator of abscisic acid (ABA) response during germination through the ubiquitin-mediated proteolysis of ABI5/DPBF1.</text>
</comment>
<comment type="subunit">
    <text evidence="2 3">Forms a heterodimer with AFP2. Interacts with ABI5/DPBF1, DPBF2, AREB3/DPBF3, ABF1, ABF3/DPBF5 and ABF4/AREB2.</text>
</comment>
<comment type="subcellular location">
    <subcellularLocation>
        <location evidence="2">Nucleus</location>
    </subcellularLocation>
</comment>
<comment type="developmental stage">
    <text evidence="2">Expressed in embryo during the latest stages of seed maturation.</text>
</comment>
<comment type="induction">
    <text evidence="2 3">Up-regulated by abscisic acid (ABA), glucose and salt.</text>
</comment>
<comment type="disruption phenotype">
    <text evidence="2 3">Exhibits slight hypersensitivity to abscisic acid (ABA), salt and osmotic stress.</text>
</comment>
<comment type="similarity">
    <text evidence="4">Belongs to the Ninja family.</text>
</comment>
<comment type="sequence caution" evidence="4">
    <conflict type="erroneous initiation">
        <sequence resource="EMBL-CDS" id="AAG52486"/>
    </conflict>
</comment>
<comment type="sequence caution" evidence="4">
    <conflict type="erroneous initiation">
        <sequence resource="EMBL-CDS" id="AAM67141"/>
    </conflict>
</comment>
<reference key="1">
    <citation type="journal article" date="2000" name="Nature">
        <title>Sequence and analysis of chromosome 1 of the plant Arabidopsis thaliana.</title>
        <authorList>
            <person name="Theologis A."/>
            <person name="Ecker J.R."/>
            <person name="Palm C.J."/>
            <person name="Federspiel N.A."/>
            <person name="Kaul S."/>
            <person name="White O."/>
            <person name="Alonso J."/>
            <person name="Altafi H."/>
            <person name="Araujo R."/>
            <person name="Bowman C.L."/>
            <person name="Brooks S.Y."/>
            <person name="Buehler E."/>
            <person name="Chan A."/>
            <person name="Chao Q."/>
            <person name="Chen H."/>
            <person name="Cheuk R.F."/>
            <person name="Chin C.W."/>
            <person name="Chung M.K."/>
            <person name="Conn L."/>
            <person name="Conway A.B."/>
            <person name="Conway A.R."/>
            <person name="Creasy T.H."/>
            <person name="Dewar K."/>
            <person name="Dunn P."/>
            <person name="Etgu P."/>
            <person name="Feldblyum T.V."/>
            <person name="Feng J.-D."/>
            <person name="Fong B."/>
            <person name="Fujii C.Y."/>
            <person name="Gill J.E."/>
            <person name="Goldsmith A.D."/>
            <person name="Haas B."/>
            <person name="Hansen N.F."/>
            <person name="Hughes B."/>
            <person name="Huizar L."/>
            <person name="Hunter J.L."/>
            <person name="Jenkins J."/>
            <person name="Johnson-Hopson C."/>
            <person name="Khan S."/>
            <person name="Khaykin E."/>
            <person name="Kim C.J."/>
            <person name="Koo H.L."/>
            <person name="Kremenetskaia I."/>
            <person name="Kurtz D.B."/>
            <person name="Kwan A."/>
            <person name="Lam B."/>
            <person name="Langin-Hooper S."/>
            <person name="Lee A."/>
            <person name="Lee J.M."/>
            <person name="Lenz C.A."/>
            <person name="Li J.H."/>
            <person name="Li Y.-P."/>
            <person name="Lin X."/>
            <person name="Liu S.X."/>
            <person name="Liu Z.A."/>
            <person name="Luros J.S."/>
            <person name="Maiti R."/>
            <person name="Marziali A."/>
            <person name="Militscher J."/>
            <person name="Miranda M."/>
            <person name="Nguyen M."/>
            <person name="Nierman W.C."/>
            <person name="Osborne B.I."/>
            <person name="Pai G."/>
            <person name="Peterson J."/>
            <person name="Pham P.K."/>
            <person name="Rizzo M."/>
            <person name="Rooney T."/>
            <person name="Rowley D."/>
            <person name="Sakano H."/>
            <person name="Salzberg S.L."/>
            <person name="Schwartz J.R."/>
            <person name="Shinn P."/>
            <person name="Southwick A.M."/>
            <person name="Sun H."/>
            <person name="Tallon L.J."/>
            <person name="Tambunga G."/>
            <person name="Toriumi M.J."/>
            <person name="Town C.D."/>
            <person name="Utterback T."/>
            <person name="Van Aken S."/>
            <person name="Vaysberg M."/>
            <person name="Vysotskaia V.S."/>
            <person name="Walker M."/>
            <person name="Wu D."/>
            <person name="Yu G."/>
            <person name="Fraser C.M."/>
            <person name="Venter J.C."/>
            <person name="Davis R.W."/>
        </authorList>
    </citation>
    <scope>NUCLEOTIDE SEQUENCE [LARGE SCALE GENOMIC DNA]</scope>
    <source>
        <strain>cv. Columbia</strain>
    </source>
</reference>
<reference key="2">
    <citation type="journal article" date="2017" name="Plant J.">
        <title>Araport11: a complete reannotation of the Arabidopsis thaliana reference genome.</title>
        <authorList>
            <person name="Cheng C.Y."/>
            <person name="Krishnakumar V."/>
            <person name="Chan A.P."/>
            <person name="Thibaud-Nissen F."/>
            <person name="Schobel S."/>
            <person name="Town C.D."/>
        </authorList>
    </citation>
    <scope>GENOME REANNOTATION</scope>
    <source>
        <strain>cv. Columbia</strain>
    </source>
</reference>
<reference key="3">
    <citation type="journal article" date="2003" name="Science">
        <title>Empirical analysis of transcriptional activity in the Arabidopsis genome.</title>
        <authorList>
            <person name="Yamada K."/>
            <person name="Lim J."/>
            <person name="Dale J.M."/>
            <person name="Chen H."/>
            <person name="Shinn P."/>
            <person name="Palm C.J."/>
            <person name="Southwick A.M."/>
            <person name="Wu H.C."/>
            <person name="Kim C.J."/>
            <person name="Nguyen M."/>
            <person name="Pham P.K."/>
            <person name="Cheuk R.F."/>
            <person name="Karlin-Newmann G."/>
            <person name="Liu S.X."/>
            <person name="Lam B."/>
            <person name="Sakano H."/>
            <person name="Wu T."/>
            <person name="Yu G."/>
            <person name="Miranda M."/>
            <person name="Quach H.L."/>
            <person name="Tripp M."/>
            <person name="Chang C.H."/>
            <person name="Lee J.M."/>
            <person name="Toriumi M.J."/>
            <person name="Chan M.M."/>
            <person name="Tang C.C."/>
            <person name="Onodera C.S."/>
            <person name="Deng J.M."/>
            <person name="Akiyama K."/>
            <person name="Ansari Y."/>
            <person name="Arakawa T."/>
            <person name="Banh J."/>
            <person name="Banno F."/>
            <person name="Bowser L."/>
            <person name="Brooks S.Y."/>
            <person name="Carninci P."/>
            <person name="Chao Q."/>
            <person name="Choy N."/>
            <person name="Enju A."/>
            <person name="Goldsmith A.D."/>
            <person name="Gurjal M."/>
            <person name="Hansen N.F."/>
            <person name="Hayashizaki Y."/>
            <person name="Johnson-Hopson C."/>
            <person name="Hsuan V.W."/>
            <person name="Iida K."/>
            <person name="Karnes M."/>
            <person name="Khan S."/>
            <person name="Koesema E."/>
            <person name="Ishida J."/>
            <person name="Jiang P.X."/>
            <person name="Jones T."/>
            <person name="Kawai J."/>
            <person name="Kamiya A."/>
            <person name="Meyers C."/>
            <person name="Nakajima M."/>
            <person name="Narusaka M."/>
            <person name="Seki M."/>
            <person name="Sakurai T."/>
            <person name="Satou M."/>
            <person name="Tamse R."/>
            <person name="Vaysberg M."/>
            <person name="Wallender E.K."/>
            <person name="Wong C."/>
            <person name="Yamamura Y."/>
            <person name="Yuan S."/>
            <person name="Shinozaki K."/>
            <person name="Davis R.W."/>
            <person name="Theologis A."/>
            <person name="Ecker J.R."/>
        </authorList>
    </citation>
    <scope>NUCLEOTIDE SEQUENCE [LARGE SCALE MRNA]</scope>
    <source>
        <strain>cv. Columbia</strain>
    </source>
</reference>
<reference key="4">
    <citation type="submission" date="2002-03" db="EMBL/GenBank/DDBJ databases">
        <title>Full-length cDNA from Arabidopsis thaliana.</title>
        <authorList>
            <person name="Brover V.V."/>
            <person name="Troukhan M.E."/>
            <person name="Alexandrov N.A."/>
            <person name="Lu Y.-P."/>
            <person name="Flavell R.B."/>
            <person name="Feldmann K.A."/>
        </authorList>
    </citation>
    <scope>NUCLEOTIDE SEQUENCE [LARGE SCALE MRNA]</scope>
</reference>
<reference key="5">
    <citation type="journal article" date="2003" name="Genes Dev.">
        <title>AFP is a novel negative regulator of ABA signaling that promotes ABI5 protein degradation.</title>
        <authorList>
            <person name="Lopez-Molina L."/>
            <person name="Mongrand S."/>
            <person name="Kinoshita N."/>
            <person name="Chua N.-H."/>
        </authorList>
    </citation>
    <scope>FUNCTION</scope>
    <scope>SUBCELLULAR LOCATION</scope>
    <scope>DEVELOPMENTAL STAGE</scope>
    <scope>INDUCTION</scope>
    <scope>INTERACTION WITH ABI5/DPBF1</scope>
    <scope>DISRUPTION PHENOTYPE</scope>
</reference>
<reference key="6">
    <citation type="journal article" date="2008" name="Plant Mol. Biol.">
        <title>A small plant-specific protein family of ABI five binding proteins (AFPs) regulates stress response in germinating Arabidopsis seeds and seedlings.</title>
        <authorList>
            <person name="Garcia M.E."/>
            <person name="Lynch T.J."/>
            <person name="Peeters J."/>
            <person name="Snowden C."/>
            <person name="Finkelstein R.R."/>
        </authorList>
    </citation>
    <scope>GENE FAMILY</scope>
    <scope>NOMENCLATURE</scope>
    <scope>SUBUNIT</scope>
    <scope>INTERACTION WITH ABI5/DPBF1; DPBF2; AREB3/DPBF3; ABF1; ABF3/DPBF5 AND ABF4/AREB2</scope>
    <scope>INDUCTION</scope>
    <scope>DISRUPTION PHENOTYPE</scope>
</reference>
<organism>
    <name type="scientific">Arabidopsis thaliana</name>
    <name type="common">Mouse-ear cress</name>
    <dbReference type="NCBI Taxonomy" id="3702"/>
    <lineage>
        <taxon>Eukaryota</taxon>
        <taxon>Viridiplantae</taxon>
        <taxon>Streptophyta</taxon>
        <taxon>Embryophyta</taxon>
        <taxon>Tracheophyta</taxon>
        <taxon>Spermatophyta</taxon>
        <taxon>Magnoliopsida</taxon>
        <taxon>eudicotyledons</taxon>
        <taxon>Gunneridae</taxon>
        <taxon>Pentapetalae</taxon>
        <taxon>rosids</taxon>
        <taxon>malvids</taxon>
        <taxon>Brassicales</taxon>
        <taxon>Brassicaceae</taxon>
        <taxon>Camelineae</taxon>
        <taxon>Arabidopsis</taxon>
    </lineage>
</organism>
<sequence>MAEANERSKEMARSNSCVFPRDLLQRFISNSVEGEDDDEEEDDDEIELNLGLSLGGRFGVDKSNKLVRSSSVVVTMPLFREDHHHHQAAAMITTKVSTETVAGATRGTGLMRTTSLPAESEEEWRKRKEMQTLRRMAAKRRRSEKLRTGVGGGNSNNPEEAATATASRRRGRPSSGLPRWSATANKSGLLRQHSAGLDSLQVSGESLGGGRAAGSSSSVSELETKASSDEARSLPSTTQPQQETTTKPTNRLRRLSSVDMNMKMEPQGKGKSEMPCVFTKGDGPNGKRVDGILYRYGSGEEVRIMCVCHGDFLSPADFVKHAGGPHVDHPLRHIVVNTSSPSNLL</sequence>
<evidence type="ECO:0000256" key="1">
    <source>
        <dbReference type="SAM" id="MobiDB-lite"/>
    </source>
</evidence>
<evidence type="ECO:0000269" key="2">
    <source>
    </source>
</evidence>
<evidence type="ECO:0000269" key="3">
    <source>
    </source>
</evidence>
<evidence type="ECO:0000305" key="4"/>
<dbReference type="EMBL" id="AC008262">
    <property type="protein sequence ID" value="AAF27062.1"/>
    <property type="molecule type" value="Genomic_DNA"/>
</dbReference>
<dbReference type="EMBL" id="AC018364">
    <property type="protein sequence ID" value="AAG52486.1"/>
    <property type="status" value="ALT_INIT"/>
    <property type="molecule type" value="Genomic_DNA"/>
</dbReference>
<dbReference type="EMBL" id="CP002684">
    <property type="protein sequence ID" value="AEE34903.1"/>
    <property type="molecule type" value="Genomic_DNA"/>
</dbReference>
<dbReference type="EMBL" id="AY136357">
    <property type="protein sequence ID" value="AAM97023.1"/>
    <property type="molecule type" value="mRNA"/>
</dbReference>
<dbReference type="EMBL" id="BT000199">
    <property type="protein sequence ID" value="AAN15518.1"/>
    <property type="molecule type" value="mRNA"/>
</dbReference>
<dbReference type="EMBL" id="AY088834">
    <property type="protein sequence ID" value="AAM67141.1"/>
    <property type="status" value="ALT_INIT"/>
    <property type="molecule type" value="mRNA"/>
</dbReference>
<dbReference type="PIR" id="F96716">
    <property type="entry name" value="F96716"/>
</dbReference>
<dbReference type="RefSeq" id="NP_564956.1">
    <property type="nucleotide sequence ID" value="NM_105593.5"/>
</dbReference>
<dbReference type="IntAct" id="Q9LQ98">
    <property type="interactions" value="10"/>
</dbReference>
<dbReference type="STRING" id="3702.Q9LQ98"/>
<dbReference type="iPTMnet" id="Q9LQ98"/>
<dbReference type="PaxDb" id="3702-AT1G69260.1"/>
<dbReference type="ProteomicsDB" id="244843"/>
<dbReference type="EnsemblPlants" id="AT1G69260.1">
    <property type="protein sequence ID" value="AT1G69260.1"/>
    <property type="gene ID" value="AT1G69260"/>
</dbReference>
<dbReference type="GeneID" id="843257"/>
<dbReference type="Gramene" id="AT1G69260.1">
    <property type="protein sequence ID" value="AT1G69260.1"/>
    <property type="gene ID" value="AT1G69260"/>
</dbReference>
<dbReference type="KEGG" id="ath:AT1G69260"/>
<dbReference type="Araport" id="AT1G69260"/>
<dbReference type="TAIR" id="AT1G69260">
    <property type="gene designation" value="AFP1"/>
</dbReference>
<dbReference type="eggNOG" id="ENOG502QW6K">
    <property type="taxonomic scope" value="Eukaryota"/>
</dbReference>
<dbReference type="HOGENOM" id="CLU_034695_0_0_1"/>
<dbReference type="InParanoid" id="Q9LQ98"/>
<dbReference type="OMA" id="WSATANN"/>
<dbReference type="PhylomeDB" id="Q9LQ98"/>
<dbReference type="PRO" id="PR:Q9LQ98"/>
<dbReference type="Proteomes" id="UP000006548">
    <property type="component" value="Chromosome 1"/>
</dbReference>
<dbReference type="ExpressionAtlas" id="Q9LQ98">
    <property type="expression patterns" value="baseline and differential"/>
</dbReference>
<dbReference type="GO" id="GO:0005634">
    <property type="term" value="C:nucleus"/>
    <property type="evidence" value="ECO:0000304"/>
    <property type="project" value="TAIR"/>
</dbReference>
<dbReference type="GO" id="GO:0009738">
    <property type="term" value="P:abscisic acid-activated signaling pathway"/>
    <property type="evidence" value="ECO:0000304"/>
    <property type="project" value="TAIR"/>
</dbReference>
<dbReference type="InterPro" id="IPR031307">
    <property type="entry name" value="Ninja_fam"/>
</dbReference>
<dbReference type="InterPro" id="IPR012463">
    <property type="entry name" value="Ninja_motif"/>
</dbReference>
<dbReference type="InterPro" id="IPR032310">
    <property type="entry name" value="NLS_NINJA_AFP-like"/>
</dbReference>
<dbReference type="InterPro" id="IPR032308">
    <property type="entry name" value="TDBD"/>
</dbReference>
<dbReference type="PANTHER" id="PTHR31413">
    <property type="entry name" value="AFP HOMOLOG 2"/>
    <property type="match status" value="1"/>
</dbReference>
<dbReference type="PANTHER" id="PTHR31413:SF46">
    <property type="entry name" value="NINJA-FAMILY PROTEIN AFP1"/>
    <property type="match status" value="1"/>
</dbReference>
<dbReference type="Pfam" id="PF07897">
    <property type="entry name" value="EAR"/>
    <property type="match status" value="1"/>
</dbReference>
<dbReference type="Pfam" id="PF16136">
    <property type="entry name" value="NLS_NINJA_AFP"/>
    <property type="match status" value="1"/>
</dbReference>
<dbReference type="Pfam" id="PF16135">
    <property type="entry name" value="TDBD"/>
    <property type="match status" value="1"/>
</dbReference>
<keyword id="KW-0539">Nucleus</keyword>
<keyword id="KW-1185">Reference proteome</keyword>